<feature type="chain" id="PRO_0000230696" description="Small ribosomal subunit protein uS3">
    <location>
        <begin position="1"/>
        <end position="213"/>
    </location>
</feature>
<feature type="domain" description="KH type-2" evidence="1">
    <location>
        <begin position="38"/>
        <end position="106"/>
    </location>
</feature>
<evidence type="ECO:0000255" key="1">
    <source>
        <dbReference type="HAMAP-Rule" id="MF_01309"/>
    </source>
</evidence>
<evidence type="ECO:0000305" key="2"/>
<protein>
    <recommendedName>
        <fullName evidence="1">Small ribosomal subunit protein uS3</fullName>
    </recommendedName>
    <alternativeName>
        <fullName evidence="2">30S ribosomal protein S3</fullName>
    </alternativeName>
</protein>
<organism>
    <name type="scientific">Oleidesulfovibrio alaskensis (strain ATCC BAA-1058 / DSM 17464 / G20)</name>
    <name type="common">Desulfovibrio alaskensis</name>
    <dbReference type="NCBI Taxonomy" id="207559"/>
    <lineage>
        <taxon>Bacteria</taxon>
        <taxon>Pseudomonadati</taxon>
        <taxon>Thermodesulfobacteriota</taxon>
        <taxon>Desulfovibrionia</taxon>
        <taxon>Desulfovibrionales</taxon>
        <taxon>Desulfovibrionaceae</taxon>
        <taxon>Oleidesulfovibrio</taxon>
    </lineage>
</organism>
<reference key="1">
    <citation type="journal article" date="2011" name="J. Bacteriol.">
        <title>Complete genome sequence and updated annotation of Desulfovibrio alaskensis G20.</title>
        <authorList>
            <person name="Hauser L.J."/>
            <person name="Land M.L."/>
            <person name="Brown S.D."/>
            <person name="Larimer F."/>
            <person name="Keller K.L."/>
            <person name="Rapp-Giles B.J."/>
            <person name="Price M.N."/>
            <person name="Lin M."/>
            <person name="Bruce D.C."/>
            <person name="Detter J.C."/>
            <person name="Tapia R."/>
            <person name="Han C.S."/>
            <person name="Goodwin L.A."/>
            <person name="Cheng J.F."/>
            <person name="Pitluck S."/>
            <person name="Copeland A."/>
            <person name="Lucas S."/>
            <person name="Nolan M."/>
            <person name="Lapidus A.L."/>
            <person name="Palumbo A.V."/>
            <person name="Wall J.D."/>
        </authorList>
    </citation>
    <scope>NUCLEOTIDE SEQUENCE [LARGE SCALE GENOMIC DNA]</scope>
    <source>
        <strain>ATCC BAA-1058 / DSM 17464 / G20</strain>
    </source>
</reference>
<keyword id="KW-1185">Reference proteome</keyword>
<keyword id="KW-0687">Ribonucleoprotein</keyword>
<keyword id="KW-0689">Ribosomal protein</keyword>
<keyword id="KW-0694">RNA-binding</keyword>
<keyword id="KW-0699">rRNA-binding</keyword>
<name>RS3_OLEA2</name>
<comment type="function">
    <text evidence="1">Binds the lower part of the 30S subunit head. Binds mRNA in the 70S ribosome, positioning it for translation.</text>
</comment>
<comment type="subunit">
    <text evidence="1">Part of the 30S ribosomal subunit. Forms a tight complex with proteins S10 and S14.</text>
</comment>
<comment type="similarity">
    <text evidence="1">Belongs to the universal ribosomal protein uS3 family.</text>
</comment>
<accession>Q30Z48</accession>
<sequence>MGQKVHPFGFRLGYNKNWQSRWFSKKEYASFVFEDHNIRKYVKKTLYHAGLSKIEIERAGGKVRLILSTARPGIVIGRKGVEIEKLRADLRRKFSREFSIEVNEIRRPETDAQLVAENIAMQLERRVAFRRAMKRTVSMSRKFGAEGIKVACAGRLAGAEIARSEWYRDGRVPLQTLRADIDYGYAEAHTTYGIIGVKVWIFKGEILDNEVEQ</sequence>
<dbReference type="EMBL" id="CP000112">
    <property type="protein sequence ID" value="ABB39048.1"/>
    <property type="molecule type" value="Genomic_DNA"/>
</dbReference>
<dbReference type="RefSeq" id="WP_011368139.1">
    <property type="nucleotide sequence ID" value="NC_007519.1"/>
</dbReference>
<dbReference type="SMR" id="Q30Z48"/>
<dbReference type="STRING" id="207559.Dde_2251"/>
<dbReference type="KEGG" id="dde:Dde_2251"/>
<dbReference type="eggNOG" id="COG0092">
    <property type="taxonomic scope" value="Bacteria"/>
</dbReference>
<dbReference type="HOGENOM" id="CLU_058591_0_2_7"/>
<dbReference type="Proteomes" id="UP000002710">
    <property type="component" value="Chromosome"/>
</dbReference>
<dbReference type="GO" id="GO:0022627">
    <property type="term" value="C:cytosolic small ribosomal subunit"/>
    <property type="evidence" value="ECO:0007669"/>
    <property type="project" value="TreeGrafter"/>
</dbReference>
<dbReference type="GO" id="GO:0003729">
    <property type="term" value="F:mRNA binding"/>
    <property type="evidence" value="ECO:0007669"/>
    <property type="project" value="UniProtKB-UniRule"/>
</dbReference>
<dbReference type="GO" id="GO:0019843">
    <property type="term" value="F:rRNA binding"/>
    <property type="evidence" value="ECO:0007669"/>
    <property type="project" value="UniProtKB-UniRule"/>
</dbReference>
<dbReference type="GO" id="GO:0003735">
    <property type="term" value="F:structural constituent of ribosome"/>
    <property type="evidence" value="ECO:0007669"/>
    <property type="project" value="InterPro"/>
</dbReference>
<dbReference type="GO" id="GO:0006412">
    <property type="term" value="P:translation"/>
    <property type="evidence" value="ECO:0007669"/>
    <property type="project" value="UniProtKB-UniRule"/>
</dbReference>
<dbReference type="CDD" id="cd02412">
    <property type="entry name" value="KH-II_30S_S3"/>
    <property type="match status" value="1"/>
</dbReference>
<dbReference type="FunFam" id="3.30.1140.32:FF:000002">
    <property type="entry name" value="30S ribosomal protein S3"/>
    <property type="match status" value="1"/>
</dbReference>
<dbReference type="FunFam" id="3.30.300.20:FF:000001">
    <property type="entry name" value="30S ribosomal protein S3"/>
    <property type="match status" value="1"/>
</dbReference>
<dbReference type="Gene3D" id="3.30.300.20">
    <property type="match status" value="1"/>
</dbReference>
<dbReference type="Gene3D" id="3.30.1140.32">
    <property type="entry name" value="Ribosomal protein S3, C-terminal domain"/>
    <property type="match status" value="1"/>
</dbReference>
<dbReference type="HAMAP" id="MF_01309_B">
    <property type="entry name" value="Ribosomal_uS3_B"/>
    <property type="match status" value="1"/>
</dbReference>
<dbReference type="InterPro" id="IPR004087">
    <property type="entry name" value="KH_dom"/>
</dbReference>
<dbReference type="InterPro" id="IPR015946">
    <property type="entry name" value="KH_dom-like_a/b"/>
</dbReference>
<dbReference type="InterPro" id="IPR004044">
    <property type="entry name" value="KH_dom_type_2"/>
</dbReference>
<dbReference type="InterPro" id="IPR009019">
    <property type="entry name" value="KH_sf_prok-type"/>
</dbReference>
<dbReference type="InterPro" id="IPR036419">
    <property type="entry name" value="Ribosomal_S3_C_sf"/>
</dbReference>
<dbReference type="InterPro" id="IPR005704">
    <property type="entry name" value="Ribosomal_uS3_bac-typ"/>
</dbReference>
<dbReference type="InterPro" id="IPR001351">
    <property type="entry name" value="Ribosomal_uS3_C"/>
</dbReference>
<dbReference type="InterPro" id="IPR018280">
    <property type="entry name" value="Ribosomal_uS3_CS"/>
</dbReference>
<dbReference type="NCBIfam" id="TIGR01009">
    <property type="entry name" value="rpsC_bact"/>
    <property type="match status" value="1"/>
</dbReference>
<dbReference type="PANTHER" id="PTHR11760">
    <property type="entry name" value="30S/40S RIBOSOMAL PROTEIN S3"/>
    <property type="match status" value="1"/>
</dbReference>
<dbReference type="PANTHER" id="PTHR11760:SF19">
    <property type="entry name" value="SMALL RIBOSOMAL SUBUNIT PROTEIN US3C"/>
    <property type="match status" value="1"/>
</dbReference>
<dbReference type="Pfam" id="PF07650">
    <property type="entry name" value="KH_2"/>
    <property type="match status" value="1"/>
</dbReference>
<dbReference type="Pfam" id="PF00189">
    <property type="entry name" value="Ribosomal_S3_C"/>
    <property type="match status" value="1"/>
</dbReference>
<dbReference type="SMART" id="SM00322">
    <property type="entry name" value="KH"/>
    <property type="match status" value="1"/>
</dbReference>
<dbReference type="SUPFAM" id="SSF54814">
    <property type="entry name" value="Prokaryotic type KH domain (KH-domain type II)"/>
    <property type="match status" value="1"/>
</dbReference>
<dbReference type="SUPFAM" id="SSF54821">
    <property type="entry name" value="Ribosomal protein S3 C-terminal domain"/>
    <property type="match status" value="1"/>
</dbReference>
<dbReference type="PROSITE" id="PS50823">
    <property type="entry name" value="KH_TYPE_2"/>
    <property type="match status" value="1"/>
</dbReference>
<dbReference type="PROSITE" id="PS00548">
    <property type="entry name" value="RIBOSOMAL_S3"/>
    <property type="match status" value="1"/>
</dbReference>
<gene>
    <name evidence="1" type="primary">rpsC</name>
    <name type="ordered locus">Dde_2251</name>
</gene>
<proteinExistence type="inferred from homology"/>